<feature type="chain" id="PRO_1000187695" description="Membrane protein insertase YidC">
    <location>
        <begin position="1"/>
        <end position="623"/>
    </location>
</feature>
<feature type="transmembrane region" description="Helical" evidence="1">
    <location>
        <begin position="8"/>
        <end position="28"/>
    </location>
</feature>
<feature type="transmembrane region" description="Helical" evidence="1">
    <location>
        <begin position="379"/>
        <end position="399"/>
    </location>
</feature>
<feature type="transmembrane region" description="Helical" evidence="1">
    <location>
        <begin position="449"/>
        <end position="469"/>
    </location>
</feature>
<feature type="transmembrane region" description="Helical" evidence="1">
    <location>
        <begin position="507"/>
        <end position="527"/>
    </location>
</feature>
<feature type="transmembrane region" description="Helical" evidence="1">
    <location>
        <begin position="543"/>
        <end position="563"/>
    </location>
</feature>
<feature type="region of interest" description="Disordered" evidence="2">
    <location>
        <begin position="33"/>
        <end position="64"/>
    </location>
</feature>
<feature type="region of interest" description="Disordered" evidence="2">
    <location>
        <begin position="601"/>
        <end position="623"/>
    </location>
</feature>
<feature type="compositionally biased region" description="Low complexity" evidence="2">
    <location>
        <begin position="44"/>
        <end position="62"/>
    </location>
</feature>
<feature type="compositionally biased region" description="Low complexity" evidence="2">
    <location>
        <begin position="601"/>
        <end position="617"/>
    </location>
</feature>
<organism>
    <name type="scientific">Cereibacter sphaeroides (strain KD131 / KCTC 12085)</name>
    <name type="common">Rhodobacter sphaeroides</name>
    <dbReference type="NCBI Taxonomy" id="557760"/>
    <lineage>
        <taxon>Bacteria</taxon>
        <taxon>Pseudomonadati</taxon>
        <taxon>Pseudomonadota</taxon>
        <taxon>Alphaproteobacteria</taxon>
        <taxon>Rhodobacterales</taxon>
        <taxon>Paracoccaceae</taxon>
        <taxon>Cereibacter</taxon>
    </lineage>
</organism>
<sequence>MDDQNKNLILATGLSFLVIMVWFFLFPPPEAVTEGEPTVATQQTAVAPSATPDAPTTAVPPDADLPETRRVAIDTPRLQGSISMLGGRLDDLSLKSYHETLDPQSQIVRLLSPVGQPNAYYALYGWTPAGALGYEDVPGANTTWTQVGSGALGVDQPVTLQWDNGKGLVFTRTISVDDHYMFSVAQTVENNSGQAVQLAPYGIVARHGKPLNLQNFFVLHEGVVGRADGKLTETKYDKVAELPQVAREGAQAEVIDAQQDGWIGFTDKYWMTTLIPQQGQPFTSVTKYVPGADIYQAETREQLVTVAPGATAEVSSRLFAGAKEWETIRAYQNEGATEPTEGAEPIPGFIDSIDWGWFFFLTKPIFTVLHWLNHMIGNMGLAIIALTFLLKALVLPLAYKSYVSMARMKELQPELEALRERAGDDKMLMQREMMRLYKEKQVNPAAGCLPILIQIPIFFSLYKVIFVTIELRHAPFFGWLKDLSAPDPSSIFNFFGLAPWAAPTPGTTMALIFIGALPILLGVSMWLQQKLNPAPGDKAQAMIFAWMPWVFMFMLGHFASGLVLYWIVNNLITFTQQYVIMRSHGHHPDIFGNIKASFSRKPAAQPAGKAANDGAAPAKKRKP</sequence>
<comment type="function">
    <text evidence="1">Required for the insertion and/or proper folding and/or complex formation of integral membrane proteins into the membrane. Involved in integration of membrane proteins that insert both dependently and independently of the Sec translocase complex, as well as at least some lipoproteins. Aids folding of multispanning membrane proteins.</text>
</comment>
<comment type="subunit">
    <text evidence="1">Interacts with the Sec translocase complex via SecD. Specifically interacts with transmembrane segments of nascent integral membrane proteins during membrane integration.</text>
</comment>
<comment type="subcellular location">
    <subcellularLocation>
        <location evidence="1">Cell inner membrane</location>
        <topology evidence="1">Multi-pass membrane protein</topology>
    </subcellularLocation>
</comment>
<comment type="similarity">
    <text evidence="1">Belongs to the OXA1/ALB3/YidC family. Type 1 subfamily.</text>
</comment>
<accession>B9KNZ6</accession>
<protein>
    <recommendedName>
        <fullName evidence="1">Membrane protein insertase YidC</fullName>
    </recommendedName>
    <alternativeName>
        <fullName evidence="1">Foldase YidC</fullName>
    </alternativeName>
    <alternativeName>
        <fullName evidence="1">Membrane integrase YidC</fullName>
    </alternativeName>
    <alternativeName>
        <fullName evidence="1">Membrane protein YidC</fullName>
    </alternativeName>
</protein>
<name>YIDC_CERSK</name>
<evidence type="ECO:0000255" key="1">
    <source>
        <dbReference type="HAMAP-Rule" id="MF_01810"/>
    </source>
</evidence>
<evidence type="ECO:0000256" key="2">
    <source>
        <dbReference type="SAM" id="MobiDB-lite"/>
    </source>
</evidence>
<reference key="1">
    <citation type="journal article" date="2009" name="J. Bacteriol.">
        <title>Complete genome sequence of Rhodobacter sphaeroides KD131.</title>
        <authorList>
            <person name="Lim S.-K."/>
            <person name="Kim S.J."/>
            <person name="Cha S.H."/>
            <person name="Oh Y.-K."/>
            <person name="Rhee H.-J."/>
            <person name="Kim M.-S."/>
            <person name="Lee J.K."/>
        </authorList>
    </citation>
    <scope>NUCLEOTIDE SEQUENCE [LARGE SCALE GENOMIC DNA]</scope>
    <source>
        <strain>KD131 / KCTC 12085</strain>
    </source>
</reference>
<keyword id="KW-0997">Cell inner membrane</keyword>
<keyword id="KW-1003">Cell membrane</keyword>
<keyword id="KW-0143">Chaperone</keyword>
<keyword id="KW-0472">Membrane</keyword>
<keyword id="KW-0653">Protein transport</keyword>
<keyword id="KW-0812">Transmembrane</keyword>
<keyword id="KW-1133">Transmembrane helix</keyword>
<keyword id="KW-0813">Transport</keyword>
<gene>
    <name evidence="1" type="primary">yidC</name>
    <name type="ordered locus">RSKD131_2458</name>
</gene>
<proteinExistence type="inferred from homology"/>
<dbReference type="EMBL" id="CP001150">
    <property type="protein sequence ID" value="ACM02318.1"/>
    <property type="molecule type" value="Genomic_DNA"/>
</dbReference>
<dbReference type="RefSeq" id="WP_015921430.1">
    <property type="nucleotide sequence ID" value="NC_011963.1"/>
</dbReference>
<dbReference type="SMR" id="B9KNZ6"/>
<dbReference type="GeneID" id="67447838"/>
<dbReference type="KEGG" id="rsk:RSKD131_2458"/>
<dbReference type="HOGENOM" id="CLU_016535_1_0_5"/>
<dbReference type="GO" id="GO:0005886">
    <property type="term" value="C:plasma membrane"/>
    <property type="evidence" value="ECO:0007669"/>
    <property type="project" value="UniProtKB-SubCell"/>
</dbReference>
<dbReference type="GO" id="GO:0032977">
    <property type="term" value="F:membrane insertase activity"/>
    <property type="evidence" value="ECO:0007669"/>
    <property type="project" value="InterPro"/>
</dbReference>
<dbReference type="GO" id="GO:0051205">
    <property type="term" value="P:protein insertion into membrane"/>
    <property type="evidence" value="ECO:0007669"/>
    <property type="project" value="TreeGrafter"/>
</dbReference>
<dbReference type="GO" id="GO:0015031">
    <property type="term" value="P:protein transport"/>
    <property type="evidence" value="ECO:0007669"/>
    <property type="project" value="UniProtKB-KW"/>
</dbReference>
<dbReference type="CDD" id="cd20070">
    <property type="entry name" value="5TM_YidC_Alb3"/>
    <property type="match status" value="1"/>
</dbReference>
<dbReference type="CDD" id="cd19961">
    <property type="entry name" value="EcYidC-like_peri"/>
    <property type="match status" value="1"/>
</dbReference>
<dbReference type="Gene3D" id="2.70.98.90">
    <property type="match status" value="1"/>
</dbReference>
<dbReference type="HAMAP" id="MF_01810">
    <property type="entry name" value="YidC_type1"/>
    <property type="match status" value="1"/>
</dbReference>
<dbReference type="InterPro" id="IPR019998">
    <property type="entry name" value="Membr_insert_YidC"/>
</dbReference>
<dbReference type="InterPro" id="IPR028053">
    <property type="entry name" value="Membr_insert_YidC_N"/>
</dbReference>
<dbReference type="InterPro" id="IPR001708">
    <property type="entry name" value="YidC/ALB3/OXA1/COX18"/>
</dbReference>
<dbReference type="InterPro" id="IPR028055">
    <property type="entry name" value="YidC/Oxa/ALB_C"/>
</dbReference>
<dbReference type="InterPro" id="IPR047196">
    <property type="entry name" value="YidC_ALB_C"/>
</dbReference>
<dbReference type="InterPro" id="IPR038221">
    <property type="entry name" value="YidC_periplasmic_sf"/>
</dbReference>
<dbReference type="NCBIfam" id="NF002353">
    <property type="entry name" value="PRK01318.1-4"/>
    <property type="match status" value="1"/>
</dbReference>
<dbReference type="NCBIfam" id="TIGR03593">
    <property type="entry name" value="yidC_nterm"/>
    <property type="match status" value="1"/>
</dbReference>
<dbReference type="NCBIfam" id="TIGR03592">
    <property type="entry name" value="yidC_oxa1_cterm"/>
    <property type="match status" value="1"/>
</dbReference>
<dbReference type="PANTHER" id="PTHR12428:SF65">
    <property type="entry name" value="CYTOCHROME C OXIDASE ASSEMBLY PROTEIN COX18, MITOCHONDRIAL"/>
    <property type="match status" value="1"/>
</dbReference>
<dbReference type="PANTHER" id="PTHR12428">
    <property type="entry name" value="OXA1"/>
    <property type="match status" value="1"/>
</dbReference>
<dbReference type="Pfam" id="PF02096">
    <property type="entry name" value="60KD_IMP"/>
    <property type="match status" value="1"/>
</dbReference>
<dbReference type="Pfam" id="PF14849">
    <property type="entry name" value="YidC_periplas"/>
    <property type="match status" value="1"/>
</dbReference>
<dbReference type="PRINTS" id="PR00701">
    <property type="entry name" value="60KDINNERMP"/>
</dbReference>
<dbReference type="PRINTS" id="PR01900">
    <property type="entry name" value="YIDCPROTEIN"/>
</dbReference>